<name>ODO1_ECOL6</name>
<keyword id="KW-0560">Oxidoreductase</keyword>
<keyword id="KW-1185">Reference proteome</keyword>
<keyword id="KW-0786">Thiamine pyrophosphate</keyword>
<keyword id="KW-0816">Tricarboxylic acid cycle</keyword>
<comment type="function">
    <text evidence="1">E1 component of the 2-oxoglutarate dehydrogenase (OGDH) complex which catalyzes the decarboxylation of 2-oxoglutarate, the first step in the conversion of 2-oxoglutarate to succinyl-CoA and CO(2).</text>
</comment>
<comment type="catalytic activity">
    <reaction evidence="1">
        <text>N(6)-[(R)-lipoyl]-L-lysyl-[protein] + 2-oxoglutarate + H(+) = N(6)-[(R)-S(8)-succinyldihydrolipoyl]-L-lysyl-[protein] + CO2</text>
        <dbReference type="Rhea" id="RHEA:12188"/>
        <dbReference type="Rhea" id="RHEA-COMP:10474"/>
        <dbReference type="Rhea" id="RHEA-COMP:20092"/>
        <dbReference type="ChEBI" id="CHEBI:15378"/>
        <dbReference type="ChEBI" id="CHEBI:16526"/>
        <dbReference type="ChEBI" id="CHEBI:16810"/>
        <dbReference type="ChEBI" id="CHEBI:83099"/>
        <dbReference type="ChEBI" id="CHEBI:83120"/>
        <dbReference type="EC" id="1.2.4.2"/>
    </reaction>
</comment>
<comment type="cofactor">
    <cofactor evidence="1">
        <name>thiamine diphosphate</name>
        <dbReference type="ChEBI" id="CHEBI:58937"/>
    </cofactor>
</comment>
<comment type="subunit">
    <text evidence="1">Homodimer. Part of the 2-oxoglutarate dehydrogenase (OGDH) complex composed of E1 (2-oxoglutarate dehydrogenase), E2 (dihydrolipoamide succinyltransferase) and E3 (dihydrolipoamide dehydrogenase); the complex contains multiple copies of the three enzymatic components (E1, E2 and E3). Interacts (via N-terminus) with SucB, the E2 component of OGDH complex.</text>
</comment>
<comment type="similarity">
    <text evidence="2">Belongs to the alpha-ketoglutarate dehydrogenase family.</text>
</comment>
<organism>
    <name type="scientific">Escherichia coli O6:H1 (strain CFT073 / ATCC 700928 / UPEC)</name>
    <dbReference type="NCBI Taxonomy" id="199310"/>
    <lineage>
        <taxon>Bacteria</taxon>
        <taxon>Pseudomonadati</taxon>
        <taxon>Pseudomonadota</taxon>
        <taxon>Gammaproteobacteria</taxon>
        <taxon>Enterobacterales</taxon>
        <taxon>Enterobacteriaceae</taxon>
        <taxon>Escherichia</taxon>
    </lineage>
</organism>
<dbReference type="EC" id="1.2.4.2" evidence="1"/>
<dbReference type="EMBL" id="AE014075">
    <property type="protein sequence ID" value="AAN79276.1"/>
    <property type="molecule type" value="Genomic_DNA"/>
</dbReference>
<dbReference type="RefSeq" id="WP_001181473.1">
    <property type="nucleotide sequence ID" value="NZ_CP051263.1"/>
</dbReference>
<dbReference type="SMR" id="P0AFG4"/>
<dbReference type="STRING" id="199310.c0803"/>
<dbReference type="GeneID" id="75205557"/>
<dbReference type="KEGG" id="ecc:c0803"/>
<dbReference type="eggNOG" id="COG0567">
    <property type="taxonomic scope" value="Bacteria"/>
</dbReference>
<dbReference type="HOGENOM" id="CLU_004709_1_0_6"/>
<dbReference type="BioCyc" id="ECOL199310:C0803-MONOMER"/>
<dbReference type="Proteomes" id="UP000001410">
    <property type="component" value="Chromosome"/>
</dbReference>
<dbReference type="GO" id="GO:0005829">
    <property type="term" value="C:cytosol"/>
    <property type="evidence" value="ECO:0007669"/>
    <property type="project" value="TreeGrafter"/>
</dbReference>
<dbReference type="GO" id="GO:0045252">
    <property type="term" value="C:oxoglutarate dehydrogenase complex"/>
    <property type="evidence" value="ECO:0007669"/>
    <property type="project" value="TreeGrafter"/>
</dbReference>
<dbReference type="GO" id="GO:0004591">
    <property type="term" value="F:oxoglutarate dehydrogenase (succinyl-transferring) activity"/>
    <property type="evidence" value="ECO:0007669"/>
    <property type="project" value="UniProtKB-EC"/>
</dbReference>
<dbReference type="GO" id="GO:0030976">
    <property type="term" value="F:thiamine pyrophosphate binding"/>
    <property type="evidence" value="ECO:0007669"/>
    <property type="project" value="InterPro"/>
</dbReference>
<dbReference type="GO" id="GO:0006099">
    <property type="term" value="P:tricarboxylic acid cycle"/>
    <property type="evidence" value="ECO:0007669"/>
    <property type="project" value="UniProtKB-KW"/>
</dbReference>
<dbReference type="CDD" id="cd02016">
    <property type="entry name" value="TPP_E1_OGDC_like"/>
    <property type="match status" value="1"/>
</dbReference>
<dbReference type="FunFam" id="1.10.287.1150:FF:000004">
    <property type="entry name" value="2-oxoglutarate dehydrogenase E1 component"/>
    <property type="match status" value="1"/>
</dbReference>
<dbReference type="FunFam" id="3.40.50.11610:FF:000001">
    <property type="entry name" value="2-oxoglutarate dehydrogenase E1 component"/>
    <property type="match status" value="1"/>
</dbReference>
<dbReference type="FunFam" id="3.40.50.12470:FF:000002">
    <property type="entry name" value="2-oxoglutarate dehydrogenase E1 component"/>
    <property type="match status" value="1"/>
</dbReference>
<dbReference type="FunFam" id="3.40.50.970:FF:000014">
    <property type="entry name" value="2-oxoglutarate dehydrogenase E1 component"/>
    <property type="match status" value="1"/>
</dbReference>
<dbReference type="Gene3D" id="3.40.50.12470">
    <property type="match status" value="1"/>
</dbReference>
<dbReference type="Gene3D" id="3.40.50.970">
    <property type="match status" value="1"/>
</dbReference>
<dbReference type="Gene3D" id="3.40.50.11610">
    <property type="entry name" value="Multifunctional 2-oxoglutarate metabolism enzyme, C-terminal domain"/>
    <property type="match status" value="1"/>
</dbReference>
<dbReference type="Gene3D" id="1.10.287.1150">
    <property type="entry name" value="TPP helical domain"/>
    <property type="match status" value="1"/>
</dbReference>
<dbReference type="InterPro" id="IPR032106">
    <property type="entry name" value="2-oxogl_dehyd_N"/>
</dbReference>
<dbReference type="InterPro" id="IPR011603">
    <property type="entry name" value="2oxoglutarate_DH_E1"/>
</dbReference>
<dbReference type="InterPro" id="IPR001017">
    <property type="entry name" value="DH_E1"/>
</dbReference>
<dbReference type="InterPro" id="IPR042179">
    <property type="entry name" value="KGD_C_sf"/>
</dbReference>
<dbReference type="InterPro" id="IPR031717">
    <property type="entry name" value="ODO-1/KGD_C"/>
</dbReference>
<dbReference type="InterPro" id="IPR029061">
    <property type="entry name" value="THDP-binding"/>
</dbReference>
<dbReference type="InterPro" id="IPR005475">
    <property type="entry name" value="Transketolase-like_Pyr-bd"/>
</dbReference>
<dbReference type="NCBIfam" id="TIGR00239">
    <property type="entry name" value="2oxo_dh_E1"/>
    <property type="match status" value="1"/>
</dbReference>
<dbReference type="NCBIfam" id="NF006914">
    <property type="entry name" value="PRK09404.1"/>
    <property type="match status" value="1"/>
</dbReference>
<dbReference type="NCBIfam" id="NF008907">
    <property type="entry name" value="PRK12270.1"/>
    <property type="match status" value="1"/>
</dbReference>
<dbReference type="PANTHER" id="PTHR23152:SF4">
    <property type="entry name" value="2-OXOADIPATE DEHYDROGENASE COMPLEX COMPONENT E1"/>
    <property type="match status" value="1"/>
</dbReference>
<dbReference type="PANTHER" id="PTHR23152">
    <property type="entry name" value="2-OXOGLUTARATE DEHYDROGENASE"/>
    <property type="match status" value="1"/>
</dbReference>
<dbReference type="Pfam" id="PF16078">
    <property type="entry name" value="2-oxogl_dehyd_N"/>
    <property type="match status" value="1"/>
</dbReference>
<dbReference type="Pfam" id="PF00676">
    <property type="entry name" value="E1_dh"/>
    <property type="match status" value="1"/>
</dbReference>
<dbReference type="Pfam" id="PF16870">
    <property type="entry name" value="OxoGdeHyase_C"/>
    <property type="match status" value="1"/>
</dbReference>
<dbReference type="Pfam" id="PF02779">
    <property type="entry name" value="Transket_pyr"/>
    <property type="match status" value="1"/>
</dbReference>
<dbReference type="PIRSF" id="PIRSF000157">
    <property type="entry name" value="Oxoglu_dh_E1"/>
    <property type="match status" value="1"/>
</dbReference>
<dbReference type="SMART" id="SM00861">
    <property type="entry name" value="Transket_pyr"/>
    <property type="match status" value="1"/>
</dbReference>
<dbReference type="SUPFAM" id="SSF52518">
    <property type="entry name" value="Thiamin diphosphate-binding fold (THDP-binding)"/>
    <property type="match status" value="2"/>
</dbReference>
<gene>
    <name type="primary">sucA</name>
    <name type="ordered locus">c0803</name>
</gene>
<evidence type="ECO:0000250" key="1">
    <source>
        <dbReference type="UniProtKB" id="P0AFG3"/>
    </source>
</evidence>
<evidence type="ECO:0000305" key="2"/>
<sequence>MQNSALKAWLDSSYLSGANQSWIEQLYEDFLTDPDSVDANWRSTFQQLPGTGVKPDQFHSQTREYFRRLAKDASRYSSTISDPDTNVKQVKVLQLINAYRFRGHQHANLDPLGLWQQDKVADLDPSFHDLTEADFQETFNVGSFASGKETMKLGELLEALKQTYCGPIGAEYMHITSTEEKRWIQQRIESGRATFNSEEKKRFLSELTAAEGLERYLGAKFPGAKRFSLEGGDALIPMLKEMIRHAGNSGTREVVLGMAHRGRLNVLVNVLGKKPQDLFDEFAGKHKEHLGTGDVKYHMGFSSDFQTDGGLVHLALAFNPSHLEIVSPVVIGSVRARLDRLDEPSSNKVLPITIHGDAAVTGQGVVQETLNMSKARGYEVGGTVRIVINNQVGFTTSNPLDARSTPYCTDIGKMVQAPIFHVNADDPEAVAFVTRLALDFRNTFKRDVFIDLVCYRRHGHNEADEPSATQPLMYQKIKKHPTPRKIYADKLEQEKVATLEDATEMVNLYRDALDAGDCVVAEWRPMNMHSFTWSPYLNHEWDEEYPNKVEMKRLQELAKRISTVPEAVEMQSRVAKIYGDRQAMAAGEKLFDWGGAENLAYATLVDEGIPVRLSGEDSGRGTFFHRHAVIHNQSNGSTYTPLQHIHNGQGAFRVWDSVLSEEAVLAFEYGYATAEPRTLTIWEAQFGDFANGAQVVIDQFISSGEQKWGRMCGLVMLLPHGYEGQGPEHSSARLERYLQLCAEQNMQVCVPSTPAQVYHMLRRQALRGMRRPLVVMSPKSLLRHPLAVSSLEELANGTFLPAIGEIDELDPKGVKRVVMCSGKVYYDLLEQRRKNNQHDVAIVRIEQLYPFPHKAMQEVLQQFAHVKDFVWCQEEPLNQGAWYCSQHHFREVIPFGASLRYAGRPASASPAVGYMSVHQKQQQDLVNDALNVE</sequence>
<proteinExistence type="inferred from homology"/>
<protein>
    <recommendedName>
        <fullName>2-oxoglutarate dehydrogenase E1 component</fullName>
        <ecNumber evidence="1">1.2.4.2</ecNumber>
    </recommendedName>
    <alternativeName>
        <fullName>Alpha-ketoglutarate dehydrogenase</fullName>
    </alternativeName>
</protein>
<accession>P0AFG4</accession>
<accession>P07015</accession>
<accession>P78225</accession>
<feature type="chain" id="PRO_0000162193" description="2-oxoglutarate dehydrogenase E1 component">
    <location>
        <begin position="1"/>
        <end position="933"/>
    </location>
</feature>
<reference key="1">
    <citation type="journal article" date="2002" name="Proc. Natl. Acad. Sci. U.S.A.">
        <title>Extensive mosaic structure revealed by the complete genome sequence of uropathogenic Escherichia coli.</title>
        <authorList>
            <person name="Welch R.A."/>
            <person name="Burland V."/>
            <person name="Plunkett G. III"/>
            <person name="Redford P."/>
            <person name="Roesch P."/>
            <person name="Rasko D."/>
            <person name="Buckles E.L."/>
            <person name="Liou S.-R."/>
            <person name="Boutin A."/>
            <person name="Hackett J."/>
            <person name="Stroud D."/>
            <person name="Mayhew G.F."/>
            <person name="Rose D.J."/>
            <person name="Zhou S."/>
            <person name="Schwartz D.C."/>
            <person name="Perna N.T."/>
            <person name="Mobley H.L.T."/>
            <person name="Donnenberg M.S."/>
            <person name="Blattner F.R."/>
        </authorList>
    </citation>
    <scope>NUCLEOTIDE SEQUENCE [LARGE SCALE GENOMIC DNA]</scope>
    <source>
        <strain>CFT073 / ATCC 700928 / UPEC</strain>
    </source>
</reference>